<gene>
    <name evidence="1" type="primary">clpX</name>
    <name type="ordered locus">YPK_3233</name>
</gene>
<proteinExistence type="inferred from homology"/>
<accession>B1JHS0</accession>
<name>CLPX_YERPY</name>
<evidence type="ECO:0000255" key="1">
    <source>
        <dbReference type="HAMAP-Rule" id="MF_00175"/>
    </source>
</evidence>
<evidence type="ECO:0000255" key="2">
    <source>
        <dbReference type="PROSITE-ProRule" id="PRU01250"/>
    </source>
</evidence>
<dbReference type="EMBL" id="CP000950">
    <property type="protein sequence ID" value="ACA69502.1"/>
    <property type="molecule type" value="Genomic_DNA"/>
</dbReference>
<dbReference type="RefSeq" id="WP_002208641.1">
    <property type="nucleotide sequence ID" value="NZ_CP009792.1"/>
</dbReference>
<dbReference type="SMR" id="B1JHS0"/>
<dbReference type="GeneID" id="96664466"/>
<dbReference type="KEGG" id="ypy:YPK_3233"/>
<dbReference type="PATRIC" id="fig|502800.11.peg.3960"/>
<dbReference type="GO" id="GO:0009376">
    <property type="term" value="C:HslUV protease complex"/>
    <property type="evidence" value="ECO:0007669"/>
    <property type="project" value="TreeGrafter"/>
</dbReference>
<dbReference type="GO" id="GO:0005524">
    <property type="term" value="F:ATP binding"/>
    <property type="evidence" value="ECO:0007669"/>
    <property type="project" value="UniProtKB-UniRule"/>
</dbReference>
<dbReference type="GO" id="GO:0016887">
    <property type="term" value="F:ATP hydrolysis activity"/>
    <property type="evidence" value="ECO:0007669"/>
    <property type="project" value="InterPro"/>
</dbReference>
<dbReference type="GO" id="GO:0140662">
    <property type="term" value="F:ATP-dependent protein folding chaperone"/>
    <property type="evidence" value="ECO:0007669"/>
    <property type="project" value="InterPro"/>
</dbReference>
<dbReference type="GO" id="GO:0046983">
    <property type="term" value="F:protein dimerization activity"/>
    <property type="evidence" value="ECO:0007669"/>
    <property type="project" value="InterPro"/>
</dbReference>
<dbReference type="GO" id="GO:0051082">
    <property type="term" value="F:unfolded protein binding"/>
    <property type="evidence" value="ECO:0007669"/>
    <property type="project" value="UniProtKB-UniRule"/>
</dbReference>
<dbReference type="GO" id="GO:0008270">
    <property type="term" value="F:zinc ion binding"/>
    <property type="evidence" value="ECO:0007669"/>
    <property type="project" value="InterPro"/>
</dbReference>
<dbReference type="GO" id="GO:0051301">
    <property type="term" value="P:cell division"/>
    <property type="evidence" value="ECO:0007669"/>
    <property type="project" value="TreeGrafter"/>
</dbReference>
<dbReference type="GO" id="GO:0051603">
    <property type="term" value="P:proteolysis involved in protein catabolic process"/>
    <property type="evidence" value="ECO:0007669"/>
    <property type="project" value="TreeGrafter"/>
</dbReference>
<dbReference type="CDD" id="cd19497">
    <property type="entry name" value="RecA-like_ClpX"/>
    <property type="match status" value="1"/>
</dbReference>
<dbReference type="FunFam" id="1.10.8.60:FF:000002">
    <property type="entry name" value="ATP-dependent Clp protease ATP-binding subunit ClpX"/>
    <property type="match status" value="1"/>
</dbReference>
<dbReference type="FunFam" id="3.40.50.300:FF:000005">
    <property type="entry name" value="ATP-dependent Clp protease ATP-binding subunit ClpX"/>
    <property type="match status" value="1"/>
</dbReference>
<dbReference type="Gene3D" id="1.10.8.60">
    <property type="match status" value="1"/>
</dbReference>
<dbReference type="Gene3D" id="6.20.220.10">
    <property type="entry name" value="ClpX chaperone, C4-type zinc finger domain"/>
    <property type="match status" value="1"/>
</dbReference>
<dbReference type="Gene3D" id="3.40.50.300">
    <property type="entry name" value="P-loop containing nucleotide triphosphate hydrolases"/>
    <property type="match status" value="1"/>
</dbReference>
<dbReference type="HAMAP" id="MF_00175">
    <property type="entry name" value="ClpX"/>
    <property type="match status" value="1"/>
</dbReference>
<dbReference type="InterPro" id="IPR003593">
    <property type="entry name" value="AAA+_ATPase"/>
</dbReference>
<dbReference type="InterPro" id="IPR050052">
    <property type="entry name" value="ATP-dep_Clp_protease_ClpX"/>
</dbReference>
<dbReference type="InterPro" id="IPR003959">
    <property type="entry name" value="ATPase_AAA_core"/>
</dbReference>
<dbReference type="InterPro" id="IPR019489">
    <property type="entry name" value="Clp_ATPase_C"/>
</dbReference>
<dbReference type="InterPro" id="IPR004487">
    <property type="entry name" value="Clp_protease_ATP-bd_su_ClpX"/>
</dbReference>
<dbReference type="InterPro" id="IPR046425">
    <property type="entry name" value="ClpX_bact"/>
</dbReference>
<dbReference type="InterPro" id="IPR027417">
    <property type="entry name" value="P-loop_NTPase"/>
</dbReference>
<dbReference type="InterPro" id="IPR010603">
    <property type="entry name" value="Znf_CppX_C4"/>
</dbReference>
<dbReference type="InterPro" id="IPR038366">
    <property type="entry name" value="Znf_CppX_C4_sf"/>
</dbReference>
<dbReference type="NCBIfam" id="TIGR00382">
    <property type="entry name" value="clpX"/>
    <property type="match status" value="1"/>
</dbReference>
<dbReference type="NCBIfam" id="NF003745">
    <property type="entry name" value="PRK05342.1"/>
    <property type="match status" value="1"/>
</dbReference>
<dbReference type="PANTHER" id="PTHR48102:SF7">
    <property type="entry name" value="ATP-DEPENDENT CLP PROTEASE ATP-BINDING SUBUNIT CLPX-LIKE, MITOCHONDRIAL"/>
    <property type="match status" value="1"/>
</dbReference>
<dbReference type="PANTHER" id="PTHR48102">
    <property type="entry name" value="ATP-DEPENDENT CLP PROTEASE ATP-BINDING SUBUNIT CLPX-LIKE, MITOCHONDRIAL-RELATED"/>
    <property type="match status" value="1"/>
</dbReference>
<dbReference type="Pfam" id="PF07724">
    <property type="entry name" value="AAA_2"/>
    <property type="match status" value="1"/>
</dbReference>
<dbReference type="Pfam" id="PF10431">
    <property type="entry name" value="ClpB_D2-small"/>
    <property type="match status" value="1"/>
</dbReference>
<dbReference type="Pfam" id="PF06689">
    <property type="entry name" value="zf-C4_ClpX"/>
    <property type="match status" value="1"/>
</dbReference>
<dbReference type="SMART" id="SM00382">
    <property type="entry name" value="AAA"/>
    <property type="match status" value="1"/>
</dbReference>
<dbReference type="SMART" id="SM01086">
    <property type="entry name" value="ClpB_D2-small"/>
    <property type="match status" value="1"/>
</dbReference>
<dbReference type="SMART" id="SM00994">
    <property type="entry name" value="zf-C4_ClpX"/>
    <property type="match status" value="1"/>
</dbReference>
<dbReference type="SUPFAM" id="SSF57716">
    <property type="entry name" value="Glucocorticoid receptor-like (DNA-binding domain)"/>
    <property type="match status" value="1"/>
</dbReference>
<dbReference type="SUPFAM" id="SSF52540">
    <property type="entry name" value="P-loop containing nucleoside triphosphate hydrolases"/>
    <property type="match status" value="1"/>
</dbReference>
<dbReference type="PROSITE" id="PS51902">
    <property type="entry name" value="CLPX_ZB"/>
    <property type="match status" value="1"/>
</dbReference>
<keyword id="KW-0067">ATP-binding</keyword>
<keyword id="KW-0143">Chaperone</keyword>
<keyword id="KW-0479">Metal-binding</keyword>
<keyword id="KW-0547">Nucleotide-binding</keyword>
<keyword id="KW-0862">Zinc</keyword>
<comment type="function">
    <text evidence="1">ATP-dependent specificity component of the Clp protease. It directs the protease to specific substrates. Can perform chaperone functions in the absence of ClpP.</text>
</comment>
<comment type="subunit">
    <text evidence="1">Component of the ClpX-ClpP complex. Forms a hexameric ring that, in the presence of ATP, binds to fourteen ClpP subunits assembled into a disk-like structure with a central cavity, resembling the structure of eukaryotic proteasomes.</text>
</comment>
<comment type="similarity">
    <text evidence="1">Belongs to the ClpX chaperone family.</text>
</comment>
<sequence length="423" mass="46033">MTDKRKDGSGKLLYCSFCGKSQHEVRKLIAGPSVYICDECVDLCNDIIREEIKEVSPHRDRSSLPTPHEIRHHLDDYVIGQEPAKKVLAVAVYNHYKRLRNGDTSNGIELGKSNILLIGPTGSGKTLLAETLARLLDVPFTMADATTLTEAGYVGEDVENIIQKLLQKCDYDVQKAQRGIVYIDEIDKISRKSDNPSITRDVSGEGVQQALLKLIEGTIAAVPPQGGRKHPQQEFLQVDTSKILFICGGAFAGLDKVIGQRINTGSGIGFGAVVKGQSEKATEGELLSQVEPEDLIKFGLIPEFIGRLPVVATLSELSEDALIQILKEPKNALTKQYQALFSLEGVELEFRDEALTAIAKKAMARKTGARGLRSIVEGALLDTMYDLPSMDSVEKVVVDESVIAGQSAPMLIYGQPEAQASGE</sequence>
<protein>
    <recommendedName>
        <fullName evidence="1">ATP-dependent Clp protease ATP-binding subunit ClpX</fullName>
    </recommendedName>
</protein>
<feature type="chain" id="PRO_1000098023" description="ATP-dependent Clp protease ATP-binding subunit ClpX">
    <location>
        <begin position="1"/>
        <end position="423"/>
    </location>
</feature>
<feature type="domain" description="ClpX-type ZB" evidence="2">
    <location>
        <begin position="2"/>
        <end position="56"/>
    </location>
</feature>
<feature type="binding site" evidence="2">
    <location>
        <position position="15"/>
    </location>
    <ligand>
        <name>Zn(2+)</name>
        <dbReference type="ChEBI" id="CHEBI:29105"/>
    </ligand>
</feature>
<feature type="binding site" evidence="2">
    <location>
        <position position="18"/>
    </location>
    <ligand>
        <name>Zn(2+)</name>
        <dbReference type="ChEBI" id="CHEBI:29105"/>
    </ligand>
</feature>
<feature type="binding site" evidence="2">
    <location>
        <position position="37"/>
    </location>
    <ligand>
        <name>Zn(2+)</name>
        <dbReference type="ChEBI" id="CHEBI:29105"/>
    </ligand>
</feature>
<feature type="binding site" evidence="2">
    <location>
        <position position="40"/>
    </location>
    <ligand>
        <name>Zn(2+)</name>
        <dbReference type="ChEBI" id="CHEBI:29105"/>
    </ligand>
</feature>
<feature type="binding site" evidence="1">
    <location>
        <begin position="120"/>
        <end position="127"/>
    </location>
    <ligand>
        <name>ATP</name>
        <dbReference type="ChEBI" id="CHEBI:30616"/>
    </ligand>
</feature>
<organism>
    <name type="scientific">Yersinia pseudotuberculosis serotype O:3 (strain YPIII)</name>
    <dbReference type="NCBI Taxonomy" id="502800"/>
    <lineage>
        <taxon>Bacteria</taxon>
        <taxon>Pseudomonadati</taxon>
        <taxon>Pseudomonadota</taxon>
        <taxon>Gammaproteobacteria</taxon>
        <taxon>Enterobacterales</taxon>
        <taxon>Yersiniaceae</taxon>
        <taxon>Yersinia</taxon>
    </lineage>
</organism>
<reference key="1">
    <citation type="submission" date="2008-02" db="EMBL/GenBank/DDBJ databases">
        <title>Complete sequence of Yersinia pseudotuberculosis YPIII.</title>
        <authorList>
            <consortium name="US DOE Joint Genome Institute"/>
            <person name="Copeland A."/>
            <person name="Lucas S."/>
            <person name="Lapidus A."/>
            <person name="Glavina del Rio T."/>
            <person name="Dalin E."/>
            <person name="Tice H."/>
            <person name="Bruce D."/>
            <person name="Goodwin L."/>
            <person name="Pitluck S."/>
            <person name="Munk A.C."/>
            <person name="Brettin T."/>
            <person name="Detter J.C."/>
            <person name="Han C."/>
            <person name="Tapia R."/>
            <person name="Schmutz J."/>
            <person name="Larimer F."/>
            <person name="Land M."/>
            <person name="Hauser L."/>
            <person name="Challacombe J.F."/>
            <person name="Green L."/>
            <person name="Lindler L.E."/>
            <person name="Nikolich M.P."/>
            <person name="Richardson P."/>
        </authorList>
    </citation>
    <scope>NUCLEOTIDE SEQUENCE [LARGE SCALE GENOMIC DNA]</scope>
    <source>
        <strain>YPIII</strain>
    </source>
</reference>